<proteinExistence type="inferred from homology"/>
<name>SPEH_METM6</name>
<organism>
    <name type="scientific">Methanococcus maripaludis (strain C6 / ATCC BAA-1332)</name>
    <dbReference type="NCBI Taxonomy" id="444158"/>
    <lineage>
        <taxon>Archaea</taxon>
        <taxon>Methanobacteriati</taxon>
        <taxon>Methanobacteriota</taxon>
        <taxon>Methanomada group</taxon>
        <taxon>Methanococci</taxon>
        <taxon>Methanococcales</taxon>
        <taxon>Methanococcaceae</taxon>
        <taxon>Methanococcus</taxon>
    </lineage>
</organism>
<protein>
    <recommendedName>
        <fullName evidence="1">S-adenosylmethionine decarboxylase proenzyme</fullName>
        <shortName evidence="1">AdoMetDC</shortName>
        <shortName evidence="1">SAMDC</shortName>
        <ecNumber evidence="1">4.1.1.50</ecNumber>
    </recommendedName>
    <component>
        <recommendedName>
            <fullName evidence="1">S-adenosylmethionine decarboxylase beta chain</fullName>
        </recommendedName>
    </component>
    <component>
        <recommendedName>
            <fullName evidence="1">S-adenosylmethionine decarboxylase alpha chain</fullName>
        </recommendedName>
    </component>
</protein>
<dbReference type="EC" id="4.1.1.50" evidence="1"/>
<dbReference type="EMBL" id="CP000867">
    <property type="protein sequence ID" value="ABX01901.1"/>
    <property type="molecule type" value="Genomic_DNA"/>
</dbReference>
<dbReference type="SMR" id="A9A978"/>
<dbReference type="STRING" id="444158.MmarC6_1087"/>
<dbReference type="KEGG" id="mmx:MmarC6_1087"/>
<dbReference type="eggNOG" id="arCOG00279">
    <property type="taxonomic scope" value="Archaea"/>
</dbReference>
<dbReference type="HOGENOM" id="CLU_125470_2_3_2"/>
<dbReference type="OrthoDB" id="114016at2157"/>
<dbReference type="PhylomeDB" id="A9A978"/>
<dbReference type="UniPathway" id="UPA00331">
    <property type="reaction ID" value="UER00451"/>
</dbReference>
<dbReference type="GO" id="GO:0005829">
    <property type="term" value="C:cytosol"/>
    <property type="evidence" value="ECO:0007669"/>
    <property type="project" value="TreeGrafter"/>
</dbReference>
<dbReference type="GO" id="GO:0004014">
    <property type="term" value="F:adenosylmethionine decarboxylase activity"/>
    <property type="evidence" value="ECO:0007669"/>
    <property type="project" value="UniProtKB-UniRule"/>
</dbReference>
<dbReference type="GO" id="GO:0008295">
    <property type="term" value="P:spermidine biosynthetic process"/>
    <property type="evidence" value="ECO:0007669"/>
    <property type="project" value="UniProtKB-UniRule"/>
</dbReference>
<dbReference type="FunFam" id="3.30.360.110:FF:000001">
    <property type="entry name" value="S-adenosylmethionine decarboxylase proenzyme"/>
    <property type="match status" value="1"/>
</dbReference>
<dbReference type="Gene3D" id="3.30.160.750">
    <property type="match status" value="1"/>
</dbReference>
<dbReference type="Gene3D" id="3.30.360.110">
    <property type="entry name" value="S-adenosylmethionine decarboxylase domain"/>
    <property type="match status" value="1"/>
</dbReference>
<dbReference type="HAMAP" id="MF_00464">
    <property type="entry name" value="AdoMetDC_1"/>
    <property type="match status" value="1"/>
</dbReference>
<dbReference type="InterPro" id="IPR042286">
    <property type="entry name" value="AdoMetDC_C"/>
</dbReference>
<dbReference type="InterPro" id="IPR003826">
    <property type="entry name" value="AdoMetDC_fam_prok"/>
</dbReference>
<dbReference type="InterPro" id="IPR042284">
    <property type="entry name" value="AdoMetDC_N"/>
</dbReference>
<dbReference type="InterPro" id="IPR016067">
    <property type="entry name" value="S-AdoMet_deCO2ase_core"/>
</dbReference>
<dbReference type="InterPro" id="IPR017716">
    <property type="entry name" value="S-AdoMet_deCOase_pro-enz"/>
</dbReference>
<dbReference type="NCBIfam" id="TIGR03330">
    <property type="entry name" value="SAM_DCase_Bsu"/>
    <property type="match status" value="1"/>
</dbReference>
<dbReference type="PANTHER" id="PTHR33866">
    <property type="entry name" value="S-ADENOSYLMETHIONINE DECARBOXYLASE PROENZYME"/>
    <property type="match status" value="1"/>
</dbReference>
<dbReference type="PANTHER" id="PTHR33866:SF2">
    <property type="entry name" value="S-ADENOSYLMETHIONINE DECARBOXYLASE PROENZYME"/>
    <property type="match status" value="1"/>
</dbReference>
<dbReference type="Pfam" id="PF02675">
    <property type="entry name" value="AdoMet_dc"/>
    <property type="match status" value="1"/>
</dbReference>
<dbReference type="SUPFAM" id="SSF56276">
    <property type="entry name" value="S-adenosylmethionine decarboxylase"/>
    <property type="match status" value="1"/>
</dbReference>
<accession>A9A978</accession>
<evidence type="ECO:0000255" key="1">
    <source>
        <dbReference type="HAMAP-Rule" id="MF_00464"/>
    </source>
</evidence>
<reference key="1">
    <citation type="submission" date="2007-10" db="EMBL/GenBank/DDBJ databases">
        <title>Complete sequence of Methanococcus maripaludis C6.</title>
        <authorList>
            <consortium name="US DOE Joint Genome Institute"/>
            <person name="Copeland A."/>
            <person name="Lucas S."/>
            <person name="Lapidus A."/>
            <person name="Barry K."/>
            <person name="Glavina del Rio T."/>
            <person name="Dalin E."/>
            <person name="Tice H."/>
            <person name="Pitluck S."/>
            <person name="Clum A."/>
            <person name="Schmutz J."/>
            <person name="Larimer F."/>
            <person name="Land M."/>
            <person name="Hauser L."/>
            <person name="Kyrpides N."/>
            <person name="Mikhailova N."/>
            <person name="Sieprawska-Lupa M."/>
            <person name="Whitman W.B."/>
            <person name="Richardson P."/>
        </authorList>
    </citation>
    <scope>NUCLEOTIDE SEQUENCE [LARGE SCALE GENOMIC DNA]</scope>
    <source>
        <strain>C6 / ATCC BAA-1332</strain>
    </source>
</reference>
<keyword id="KW-0068">Autocatalytic cleavage</keyword>
<keyword id="KW-0210">Decarboxylase</keyword>
<keyword id="KW-0456">Lyase</keyword>
<keyword id="KW-0620">Polyamine biosynthesis</keyword>
<keyword id="KW-0670">Pyruvate</keyword>
<keyword id="KW-0949">S-adenosyl-L-methionine</keyword>
<keyword id="KW-0704">Schiff base</keyword>
<keyword id="KW-0745">Spermidine biosynthesis</keyword>
<keyword id="KW-0865">Zymogen</keyword>
<sequence length="122" mass="13633">MKQLGKHIILELWGCENQALDDQPGIEKMLVDAVKACGATLICVKTHKFSPQGVTGVAVLSESHISIHTWPELRYAAMDVFTCGEHVTPHDTIPEIQKFLKPEKIDVMDIKRGIIEVDEVKE</sequence>
<comment type="function">
    <text evidence="1">Catalyzes the decarboxylation of S-adenosylmethionine to S-adenosylmethioninamine (dcAdoMet), the propylamine donor required for the synthesis of the polyamines spermine and spermidine from the diamine putrescine.</text>
</comment>
<comment type="catalytic activity">
    <reaction evidence="1">
        <text>S-adenosyl-L-methionine + H(+) = S-adenosyl 3-(methylsulfanyl)propylamine + CO2</text>
        <dbReference type="Rhea" id="RHEA:15981"/>
        <dbReference type="ChEBI" id="CHEBI:15378"/>
        <dbReference type="ChEBI" id="CHEBI:16526"/>
        <dbReference type="ChEBI" id="CHEBI:57443"/>
        <dbReference type="ChEBI" id="CHEBI:59789"/>
        <dbReference type="EC" id="4.1.1.50"/>
    </reaction>
</comment>
<comment type="cofactor">
    <cofactor evidence="1">
        <name>pyruvate</name>
        <dbReference type="ChEBI" id="CHEBI:15361"/>
    </cofactor>
    <text evidence="1">Binds 1 pyruvoyl group covalently per subunit.</text>
</comment>
<comment type="pathway">
    <text evidence="1">Amine and polyamine biosynthesis; S-adenosylmethioninamine biosynthesis; S-adenosylmethioninamine from S-adenosyl-L-methionine: step 1/1.</text>
</comment>
<comment type="subunit">
    <text evidence="1">Heterotetramer of two alpha and two beta chains arranged as a dimer of alpha/beta heterodimers.</text>
</comment>
<comment type="PTM">
    <text evidence="1">Is synthesized initially as an inactive proenzyme. Formation of the active enzyme involves a self-maturation process in which the active site pyruvoyl group is generated from an internal serine residue via an autocatalytic post-translational modification. Two non-identical subunits are generated from the proenzyme in this reaction, and the pyruvate is formed at the N-terminus of the alpha chain, which is derived from the carboxyl end of the proenzyme. The post-translation cleavage follows an unusual pathway, termed non-hydrolytic serinolysis, in which the side chain hydroxyl group of the serine supplies its oxygen atom to form the C-terminus of the beta chain, while the remainder of the serine residue undergoes an oxidative deamination to produce ammonia and the pyruvoyl group blocking the N-terminus of the alpha chain.</text>
</comment>
<comment type="similarity">
    <text evidence="1">Belongs to the prokaryotic AdoMetDC family. Type 1 subfamily.</text>
</comment>
<gene>
    <name evidence="1" type="primary">speH</name>
    <name type="ordered locus">MmarC6_1087</name>
</gene>
<feature type="chain" id="PRO_1000193201" description="S-adenosylmethionine decarboxylase beta chain" evidence="1">
    <location>
        <begin position="1"/>
        <end position="62"/>
    </location>
</feature>
<feature type="chain" id="PRO_1000193202" description="S-adenosylmethionine decarboxylase alpha chain" evidence="1">
    <location>
        <begin position="63"/>
        <end position="122"/>
    </location>
</feature>
<feature type="active site" description="Schiff-base intermediate with substrate; via pyruvic acid" evidence="1">
    <location>
        <position position="63"/>
    </location>
</feature>
<feature type="active site" description="Proton acceptor; for processing activity" evidence="1">
    <location>
        <position position="68"/>
    </location>
</feature>
<feature type="active site" description="Proton donor; for catalytic activity" evidence="1">
    <location>
        <position position="83"/>
    </location>
</feature>
<feature type="site" description="Cleavage (non-hydrolytic); by autolysis" evidence="1">
    <location>
        <begin position="62"/>
        <end position="63"/>
    </location>
</feature>
<feature type="modified residue" description="Pyruvic acid (Ser); by autocatalysis" evidence="1">
    <location>
        <position position="63"/>
    </location>
</feature>